<accession>Q66F62</accession>
<evidence type="ECO:0000255" key="1">
    <source>
        <dbReference type="HAMAP-Rule" id="MF_01077"/>
    </source>
</evidence>
<proteinExistence type="inferred from homology"/>
<feature type="chain" id="PRO_0000229296" description="Ribosome maturation factor RimP">
    <location>
        <begin position="1"/>
        <end position="152"/>
    </location>
</feature>
<gene>
    <name evidence="1" type="primary">rimP</name>
    <name type="ordered locus">YPTB0478</name>
</gene>
<keyword id="KW-0963">Cytoplasm</keyword>
<keyword id="KW-0690">Ribosome biogenesis</keyword>
<comment type="function">
    <text evidence="1">Required for maturation of 30S ribosomal subunits.</text>
</comment>
<comment type="subcellular location">
    <subcellularLocation>
        <location evidence="1">Cytoplasm</location>
    </subcellularLocation>
</comment>
<comment type="similarity">
    <text evidence="1">Belongs to the RimP family.</text>
</comment>
<sequence length="152" mass="16871">MGLSTLEQKLTEIISAPVEALGYELVGIEFIRGRQSTLRIYIDSDDGITVDACADVSHQVSAVLDVEDPITVAYNLEVSSPGLDRPMFTAEHYTRYLGEEVTLVLRMAMQNRRKWQGIIKAVDGEMITVTVDGKDEVFALSNIQKANLVPHF</sequence>
<protein>
    <recommendedName>
        <fullName evidence="1">Ribosome maturation factor RimP</fullName>
    </recommendedName>
</protein>
<organism>
    <name type="scientific">Yersinia pseudotuberculosis serotype I (strain IP32953)</name>
    <dbReference type="NCBI Taxonomy" id="273123"/>
    <lineage>
        <taxon>Bacteria</taxon>
        <taxon>Pseudomonadati</taxon>
        <taxon>Pseudomonadota</taxon>
        <taxon>Gammaproteobacteria</taxon>
        <taxon>Enterobacterales</taxon>
        <taxon>Yersiniaceae</taxon>
        <taxon>Yersinia</taxon>
    </lineage>
</organism>
<reference key="1">
    <citation type="journal article" date="2004" name="Proc. Natl. Acad. Sci. U.S.A.">
        <title>Insights into the evolution of Yersinia pestis through whole-genome comparison with Yersinia pseudotuberculosis.</title>
        <authorList>
            <person name="Chain P.S.G."/>
            <person name="Carniel E."/>
            <person name="Larimer F.W."/>
            <person name="Lamerdin J."/>
            <person name="Stoutland P.O."/>
            <person name="Regala W.M."/>
            <person name="Georgescu A.M."/>
            <person name="Vergez L.M."/>
            <person name="Land M.L."/>
            <person name="Motin V.L."/>
            <person name="Brubaker R.R."/>
            <person name="Fowler J."/>
            <person name="Hinnebusch J."/>
            <person name="Marceau M."/>
            <person name="Medigue C."/>
            <person name="Simonet M."/>
            <person name="Chenal-Francisque V."/>
            <person name="Souza B."/>
            <person name="Dacheux D."/>
            <person name="Elliott J.M."/>
            <person name="Derbise A."/>
            <person name="Hauser L.J."/>
            <person name="Garcia E."/>
        </authorList>
    </citation>
    <scope>NUCLEOTIDE SEQUENCE [LARGE SCALE GENOMIC DNA]</scope>
    <source>
        <strain>IP32953</strain>
    </source>
</reference>
<dbReference type="EMBL" id="BX936398">
    <property type="protein sequence ID" value="CAH19718.1"/>
    <property type="molecule type" value="Genomic_DNA"/>
</dbReference>
<dbReference type="SMR" id="Q66F62"/>
<dbReference type="KEGG" id="yps:YPTB0478"/>
<dbReference type="Proteomes" id="UP000001011">
    <property type="component" value="Chromosome"/>
</dbReference>
<dbReference type="GO" id="GO:0005829">
    <property type="term" value="C:cytosol"/>
    <property type="evidence" value="ECO:0007669"/>
    <property type="project" value="TreeGrafter"/>
</dbReference>
<dbReference type="GO" id="GO:0000028">
    <property type="term" value="P:ribosomal small subunit assembly"/>
    <property type="evidence" value="ECO:0007669"/>
    <property type="project" value="TreeGrafter"/>
</dbReference>
<dbReference type="GO" id="GO:0006412">
    <property type="term" value="P:translation"/>
    <property type="evidence" value="ECO:0007669"/>
    <property type="project" value="TreeGrafter"/>
</dbReference>
<dbReference type="CDD" id="cd01734">
    <property type="entry name" value="YlxS_C"/>
    <property type="match status" value="1"/>
</dbReference>
<dbReference type="FunFam" id="2.30.30.180:FF:000001">
    <property type="entry name" value="Ribosome maturation factor RimP"/>
    <property type="match status" value="1"/>
</dbReference>
<dbReference type="FunFam" id="3.30.300.70:FF:000001">
    <property type="entry name" value="Ribosome maturation factor RimP"/>
    <property type="match status" value="1"/>
</dbReference>
<dbReference type="Gene3D" id="2.30.30.180">
    <property type="entry name" value="Ribosome maturation factor RimP, C-terminal domain"/>
    <property type="match status" value="1"/>
</dbReference>
<dbReference type="Gene3D" id="3.30.300.70">
    <property type="entry name" value="RimP-like superfamily, N-terminal"/>
    <property type="match status" value="1"/>
</dbReference>
<dbReference type="HAMAP" id="MF_01077">
    <property type="entry name" value="RimP"/>
    <property type="match status" value="1"/>
</dbReference>
<dbReference type="InterPro" id="IPR003728">
    <property type="entry name" value="Ribosome_maturation_RimP"/>
</dbReference>
<dbReference type="InterPro" id="IPR028998">
    <property type="entry name" value="RimP_C"/>
</dbReference>
<dbReference type="InterPro" id="IPR036847">
    <property type="entry name" value="RimP_C_sf"/>
</dbReference>
<dbReference type="InterPro" id="IPR028989">
    <property type="entry name" value="RimP_N"/>
</dbReference>
<dbReference type="InterPro" id="IPR035956">
    <property type="entry name" value="RimP_N_sf"/>
</dbReference>
<dbReference type="NCBIfam" id="NF000927">
    <property type="entry name" value="PRK00092.1-1"/>
    <property type="match status" value="1"/>
</dbReference>
<dbReference type="PANTHER" id="PTHR33867">
    <property type="entry name" value="RIBOSOME MATURATION FACTOR RIMP"/>
    <property type="match status" value="1"/>
</dbReference>
<dbReference type="PANTHER" id="PTHR33867:SF1">
    <property type="entry name" value="RIBOSOME MATURATION FACTOR RIMP"/>
    <property type="match status" value="1"/>
</dbReference>
<dbReference type="Pfam" id="PF17384">
    <property type="entry name" value="DUF150_C"/>
    <property type="match status" value="1"/>
</dbReference>
<dbReference type="Pfam" id="PF02576">
    <property type="entry name" value="RimP_N"/>
    <property type="match status" value="1"/>
</dbReference>
<dbReference type="SUPFAM" id="SSF74942">
    <property type="entry name" value="YhbC-like, C-terminal domain"/>
    <property type="match status" value="1"/>
</dbReference>
<dbReference type="SUPFAM" id="SSF75420">
    <property type="entry name" value="YhbC-like, N-terminal domain"/>
    <property type="match status" value="1"/>
</dbReference>
<name>RIMP_YERPS</name>